<reference key="1">
    <citation type="journal article" date="2005" name="Nature">
        <title>The genome of the social amoeba Dictyostelium discoideum.</title>
        <authorList>
            <person name="Eichinger L."/>
            <person name="Pachebat J.A."/>
            <person name="Gloeckner G."/>
            <person name="Rajandream M.A."/>
            <person name="Sucgang R."/>
            <person name="Berriman M."/>
            <person name="Song J."/>
            <person name="Olsen R."/>
            <person name="Szafranski K."/>
            <person name="Xu Q."/>
            <person name="Tunggal B."/>
            <person name="Kummerfeld S."/>
            <person name="Madera M."/>
            <person name="Konfortov B.A."/>
            <person name="Rivero F."/>
            <person name="Bankier A.T."/>
            <person name="Lehmann R."/>
            <person name="Hamlin N."/>
            <person name="Davies R."/>
            <person name="Gaudet P."/>
            <person name="Fey P."/>
            <person name="Pilcher K."/>
            <person name="Chen G."/>
            <person name="Saunders D."/>
            <person name="Sodergren E.J."/>
            <person name="Davis P."/>
            <person name="Kerhornou A."/>
            <person name="Nie X."/>
            <person name="Hall N."/>
            <person name="Anjard C."/>
            <person name="Hemphill L."/>
            <person name="Bason N."/>
            <person name="Farbrother P."/>
            <person name="Desany B."/>
            <person name="Just E."/>
            <person name="Morio T."/>
            <person name="Rost R."/>
            <person name="Churcher C.M."/>
            <person name="Cooper J."/>
            <person name="Haydock S."/>
            <person name="van Driessche N."/>
            <person name="Cronin A."/>
            <person name="Goodhead I."/>
            <person name="Muzny D.M."/>
            <person name="Mourier T."/>
            <person name="Pain A."/>
            <person name="Lu M."/>
            <person name="Harper D."/>
            <person name="Lindsay R."/>
            <person name="Hauser H."/>
            <person name="James K.D."/>
            <person name="Quiles M."/>
            <person name="Madan Babu M."/>
            <person name="Saito T."/>
            <person name="Buchrieser C."/>
            <person name="Wardroper A."/>
            <person name="Felder M."/>
            <person name="Thangavelu M."/>
            <person name="Johnson D."/>
            <person name="Knights A."/>
            <person name="Loulseged H."/>
            <person name="Mungall K.L."/>
            <person name="Oliver K."/>
            <person name="Price C."/>
            <person name="Quail M.A."/>
            <person name="Urushihara H."/>
            <person name="Hernandez J."/>
            <person name="Rabbinowitsch E."/>
            <person name="Steffen D."/>
            <person name="Sanders M."/>
            <person name="Ma J."/>
            <person name="Kohara Y."/>
            <person name="Sharp S."/>
            <person name="Simmonds M.N."/>
            <person name="Spiegler S."/>
            <person name="Tivey A."/>
            <person name="Sugano S."/>
            <person name="White B."/>
            <person name="Walker D."/>
            <person name="Woodward J.R."/>
            <person name="Winckler T."/>
            <person name="Tanaka Y."/>
            <person name="Shaulsky G."/>
            <person name="Schleicher M."/>
            <person name="Weinstock G.M."/>
            <person name="Rosenthal A."/>
            <person name="Cox E.C."/>
            <person name="Chisholm R.L."/>
            <person name="Gibbs R.A."/>
            <person name="Loomis W.F."/>
            <person name="Platzer M."/>
            <person name="Kay R.R."/>
            <person name="Williams J.G."/>
            <person name="Dear P.H."/>
            <person name="Noegel A.A."/>
            <person name="Barrell B.G."/>
            <person name="Kuspa A."/>
        </authorList>
    </citation>
    <scope>NUCLEOTIDE SEQUENCE [LARGE SCALE GENOMIC DNA]</scope>
    <source>
        <strain>AX4</strain>
    </source>
</reference>
<protein>
    <recommendedName>
        <fullName>Coiled-coil domain-containing protein 130 homolog</fullName>
    </recommendedName>
</protein>
<organism>
    <name type="scientific">Dictyostelium discoideum</name>
    <name type="common">Social amoeba</name>
    <dbReference type="NCBI Taxonomy" id="44689"/>
    <lineage>
        <taxon>Eukaryota</taxon>
        <taxon>Amoebozoa</taxon>
        <taxon>Evosea</taxon>
        <taxon>Eumycetozoa</taxon>
        <taxon>Dictyostelia</taxon>
        <taxon>Dictyosteliales</taxon>
        <taxon>Dictyosteliaceae</taxon>
        <taxon>Dictyostelium</taxon>
    </lineage>
</organism>
<feature type="chain" id="PRO_0000328382" description="Coiled-coil domain-containing protein 130 homolog">
    <location>
        <begin position="1"/>
        <end position="325"/>
    </location>
</feature>
<feature type="coiled-coil region" evidence="1">
    <location>
        <begin position="156"/>
        <end position="262"/>
    </location>
</feature>
<dbReference type="EMBL" id="AAFI02000042">
    <property type="protein sequence ID" value="EAL66561.1"/>
    <property type="molecule type" value="Genomic_DNA"/>
</dbReference>
<dbReference type="RefSeq" id="XP_640527.1">
    <property type="nucleotide sequence ID" value="XM_635435.1"/>
</dbReference>
<dbReference type="SMR" id="Q54TR4"/>
<dbReference type="FunCoup" id="Q54TR4">
    <property type="interactions" value="318"/>
</dbReference>
<dbReference type="STRING" id="44689.Q54TR4"/>
<dbReference type="PaxDb" id="44689-DDB0305013"/>
<dbReference type="EnsemblProtists" id="EAL66561">
    <property type="protein sequence ID" value="EAL66561"/>
    <property type="gene ID" value="DDB_G0281599"/>
</dbReference>
<dbReference type="GeneID" id="8623137"/>
<dbReference type="KEGG" id="ddi:DDB_G0281599"/>
<dbReference type="dictyBase" id="DDB_G0281599">
    <property type="gene designation" value="ccdc130"/>
</dbReference>
<dbReference type="VEuPathDB" id="AmoebaDB:DDB_G0281599"/>
<dbReference type="eggNOG" id="KOG2990">
    <property type="taxonomic scope" value="Eukaryota"/>
</dbReference>
<dbReference type="HOGENOM" id="CLU_050402_1_0_1"/>
<dbReference type="InParanoid" id="Q54TR4"/>
<dbReference type="OMA" id="RNMSVWD"/>
<dbReference type="PhylomeDB" id="Q54TR4"/>
<dbReference type="PRO" id="PR:Q54TR4"/>
<dbReference type="Proteomes" id="UP000002195">
    <property type="component" value="Chromosome 3"/>
</dbReference>
<dbReference type="GO" id="GO:0071014">
    <property type="term" value="C:post-mRNA release spliceosomal complex"/>
    <property type="evidence" value="ECO:0000318"/>
    <property type="project" value="GO_Central"/>
</dbReference>
<dbReference type="GO" id="GO:0005684">
    <property type="term" value="C:U2-type spliceosomal complex"/>
    <property type="evidence" value="ECO:0000318"/>
    <property type="project" value="GO_Central"/>
</dbReference>
<dbReference type="GO" id="GO:0000398">
    <property type="term" value="P:mRNA splicing, via spliceosome"/>
    <property type="evidence" value="ECO:0007669"/>
    <property type="project" value="InterPro"/>
</dbReference>
<dbReference type="GO" id="GO:0008380">
    <property type="term" value="P:RNA splicing"/>
    <property type="evidence" value="ECO:0000318"/>
    <property type="project" value="GO_Central"/>
</dbReference>
<dbReference type="InterPro" id="IPR007590">
    <property type="entry name" value="Saf4/Yju2"/>
</dbReference>
<dbReference type="PANTHER" id="PTHR12111">
    <property type="entry name" value="SPLICING FACTOR YJU2"/>
    <property type="match status" value="1"/>
</dbReference>
<dbReference type="PANTHER" id="PTHR12111:SF2">
    <property type="entry name" value="SPLICING FACTOR YJU2B-RELATED"/>
    <property type="match status" value="1"/>
</dbReference>
<dbReference type="Pfam" id="PF04502">
    <property type="entry name" value="Saf4_Yju2"/>
    <property type="match status" value="1"/>
</dbReference>
<evidence type="ECO:0000255" key="1"/>
<evidence type="ECO:0000305" key="2"/>
<sequence>MAERKATNKYYPPDWDPSKGSINQYRGQHHLRDRARKIDQGILIIRFEMPFSVWCLGCECHIGMGVRFNAEKKTVDKYFTSNIYSFKMKCHQCSNQFEIQNDPKNTDYKLISGLKKRIEQFNPEDSELPSSFIIKYDDNNNNNNNNNNNDNNDTLLKLENKKLDIEKGKKESTQLEKLQEIMTNRTINDYQLSSIMRKSFREKKKEDQIELERQKSKGIMIPLLKENQDDIDTAKDIDFNSNSLKRKLDESNKLKRELIKNESILKSTNNVNNNNNVNNNNNNNNNNKIEAIIRKKSKIDPSLFNNNVNKNKSKVNETFTSNLFK</sequence>
<name>CC130_DICDI</name>
<gene>
    <name type="ORF">DDB_G0281599</name>
</gene>
<accession>Q54TR4</accession>
<keyword id="KW-0175">Coiled coil</keyword>
<keyword id="KW-1185">Reference proteome</keyword>
<proteinExistence type="inferred from homology"/>
<comment type="similarity">
    <text evidence="2">Belongs to the CWC16 family.</text>
</comment>